<comment type="cofactor">
    <cofactor evidence="1">
        <name>Zn(2+)</name>
        <dbReference type="ChEBI" id="CHEBI:29105"/>
    </cofactor>
    <text evidence="1">Binds 2 Zn(2+) ions per subunit.</text>
</comment>
<comment type="similarity">
    <text evidence="2">Belongs to the peptidase M20A family.</text>
</comment>
<dbReference type="EC" id="3.4.13.-"/>
<dbReference type="EMBL" id="AE015929">
    <property type="protein sequence ID" value="AAO05023.1"/>
    <property type="molecule type" value="Genomic_DNA"/>
</dbReference>
<dbReference type="RefSeq" id="NP_764979.1">
    <property type="nucleotide sequence ID" value="NC_004461.1"/>
</dbReference>
<dbReference type="SMR" id="Q8CNV2"/>
<dbReference type="KEGG" id="sep:SE_1424"/>
<dbReference type="PATRIC" id="fig|176280.10.peg.1390"/>
<dbReference type="eggNOG" id="COG0624">
    <property type="taxonomic scope" value="Bacteria"/>
</dbReference>
<dbReference type="HOGENOM" id="CLU_031786_2_0_9"/>
<dbReference type="OrthoDB" id="9761532at2"/>
<dbReference type="Proteomes" id="UP000001411">
    <property type="component" value="Chromosome"/>
</dbReference>
<dbReference type="GO" id="GO:0008777">
    <property type="term" value="F:acetylornithine deacetylase activity"/>
    <property type="evidence" value="ECO:0007669"/>
    <property type="project" value="TreeGrafter"/>
</dbReference>
<dbReference type="GO" id="GO:0016805">
    <property type="term" value="F:dipeptidase activity"/>
    <property type="evidence" value="ECO:0007669"/>
    <property type="project" value="UniProtKB-KW"/>
</dbReference>
<dbReference type="GO" id="GO:0008237">
    <property type="term" value="F:metallopeptidase activity"/>
    <property type="evidence" value="ECO:0007669"/>
    <property type="project" value="UniProtKB-KW"/>
</dbReference>
<dbReference type="GO" id="GO:0008270">
    <property type="term" value="F:zinc ion binding"/>
    <property type="evidence" value="ECO:0007669"/>
    <property type="project" value="InterPro"/>
</dbReference>
<dbReference type="GO" id="GO:0006526">
    <property type="term" value="P:L-arginine biosynthetic process"/>
    <property type="evidence" value="ECO:0007669"/>
    <property type="project" value="TreeGrafter"/>
</dbReference>
<dbReference type="GO" id="GO:0006508">
    <property type="term" value="P:proteolysis"/>
    <property type="evidence" value="ECO:0007669"/>
    <property type="project" value="UniProtKB-KW"/>
</dbReference>
<dbReference type="CDD" id="cd03888">
    <property type="entry name" value="M20_PepV"/>
    <property type="match status" value="1"/>
</dbReference>
<dbReference type="Gene3D" id="3.30.70.360">
    <property type="match status" value="2"/>
</dbReference>
<dbReference type="Gene3D" id="3.40.630.10">
    <property type="entry name" value="Zn peptidases"/>
    <property type="match status" value="1"/>
</dbReference>
<dbReference type="InterPro" id="IPR036264">
    <property type="entry name" value="Bact_exopeptidase_dim_dom"/>
</dbReference>
<dbReference type="InterPro" id="IPR010964">
    <property type="entry name" value="M20A_pepV-rel"/>
</dbReference>
<dbReference type="InterPro" id="IPR002933">
    <property type="entry name" value="Peptidase_M20"/>
</dbReference>
<dbReference type="InterPro" id="IPR050072">
    <property type="entry name" value="Peptidase_M20A"/>
</dbReference>
<dbReference type="NCBIfam" id="TIGR01887">
    <property type="entry name" value="dipeptidaselike"/>
    <property type="match status" value="1"/>
</dbReference>
<dbReference type="NCBIfam" id="NF005591">
    <property type="entry name" value="PRK07318.1"/>
    <property type="match status" value="1"/>
</dbReference>
<dbReference type="PANTHER" id="PTHR43808">
    <property type="entry name" value="ACETYLORNITHINE DEACETYLASE"/>
    <property type="match status" value="1"/>
</dbReference>
<dbReference type="PANTHER" id="PTHR43808:SF31">
    <property type="entry name" value="N-ACETYL-L-CITRULLINE DEACETYLASE"/>
    <property type="match status" value="1"/>
</dbReference>
<dbReference type="Pfam" id="PF01546">
    <property type="entry name" value="Peptidase_M20"/>
    <property type="match status" value="1"/>
</dbReference>
<dbReference type="SUPFAM" id="SSF55031">
    <property type="entry name" value="Bacterial exopeptidase dimerisation domain"/>
    <property type="match status" value="1"/>
</dbReference>
<dbReference type="SUPFAM" id="SSF53187">
    <property type="entry name" value="Zn-dependent exopeptidases"/>
    <property type="match status" value="1"/>
</dbReference>
<organism>
    <name type="scientific">Staphylococcus epidermidis (strain ATCC 12228 / FDA PCI 1200)</name>
    <dbReference type="NCBI Taxonomy" id="176280"/>
    <lineage>
        <taxon>Bacteria</taxon>
        <taxon>Bacillati</taxon>
        <taxon>Bacillota</taxon>
        <taxon>Bacilli</taxon>
        <taxon>Bacillales</taxon>
        <taxon>Staphylococcaceae</taxon>
        <taxon>Staphylococcus</taxon>
    </lineage>
</organism>
<evidence type="ECO:0000250" key="1"/>
<evidence type="ECO:0000305" key="2"/>
<feature type="chain" id="PRO_0000282635" description="Putative dipeptidase SE_1424">
    <location>
        <begin position="1"/>
        <end position="469"/>
    </location>
</feature>
<feature type="active site" evidence="1">
    <location>
        <position position="86"/>
    </location>
</feature>
<feature type="active site" description="Proton acceptor" evidence="1">
    <location>
        <position position="149"/>
    </location>
</feature>
<feature type="binding site" evidence="1">
    <location>
        <position position="84"/>
    </location>
    <ligand>
        <name>Zn(2+)</name>
        <dbReference type="ChEBI" id="CHEBI:29105"/>
        <label>2</label>
    </ligand>
</feature>
<feature type="binding site" evidence="1">
    <location>
        <position position="115"/>
    </location>
    <ligand>
        <name>Zn(2+)</name>
        <dbReference type="ChEBI" id="CHEBI:29105"/>
        <label>1</label>
    </ligand>
</feature>
<feature type="binding site" evidence="1">
    <location>
        <position position="115"/>
    </location>
    <ligand>
        <name>Zn(2+)</name>
        <dbReference type="ChEBI" id="CHEBI:29105"/>
        <label>2</label>
    </ligand>
</feature>
<feature type="binding site" evidence="1">
    <location>
        <position position="150"/>
    </location>
    <ligand>
        <name>Zn(2+)</name>
        <dbReference type="ChEBI" id="CHEBI:29105"/>
        <label>1</label>
    </ligand>
</feature>
<feature type="binding site" evidence="1">
    <location>
        <position position="173"/>
    </location>
    <ligand>
        <name>Zn(2+)</name>
        <dbReference type="ChEBI" id="CHEBI:29105"/>
        <label>2</label>
    </ligand>
</feature>
<feature type="binding site" evidence="1">
    <location>
        <position position="440"/>
    </location>
    <ligand>
        <name>Zn(2+)</name>
        <dbReference type="ChEBI" id="CHEBI:29105"/>
        <label>1</label>
    </ligand>
</feature>
<proteinExistence type="inferred from homology"/>
<keyword id="KW-0224">Dipeptidase</keyword>
<keyword id="KW-0378">Hydrolase</keyword>
<keyword id="KW-0479">Metal-binding</keyword>
<keyword id="KW-0482">Metalloprotease</keyword>
<keyword id="KW-0645">Protease</keyword>
<keyword id="KW-0862">Zinc</keyword>
<protein>
    <recommendedName>
        <fullName>Putative dipeptidase SE_1424</fullName>
        <ecNumber>3.4.13.-</ecNumber>
    </recommendedName>
</protein>
<accession>Q8CNV2</accession>
<reference key="1">
    <citation type="journal article" date="2003" name="Mol. Microbiol.">
        <title>Genome-based analysis of virulence genes in a non-biofilm-forming Staphylococcus epidermidis strain (ATCC 12228).</title>
        <authorList>
            <person name="Zhang Y.-Q."/>
            <person name="Ren S.-X."/>
            <person name="Li H.-L."/>
            <person name="Wang Y.-X."/>
            <person name="Fu G."/>
            <person name="Yang J."/>
            <person name="Qin Z.-Q."/>
            <person name="Miao Y.-G."/>
            <person name="Wang W.-Y."/>
            <person name="Chen R.-S."/>
            <person name="Shen Y."/>
            <person name="Chen Z."/>
            <person name="Yuan Z.-H."/>
            <person name="Zhao G.-P."/>
            <person name="Qu D."/>
            <person name="Danchin A."/>
            <person name="Wen Y.-M."/>
        </authorList>
    </citation>
    <scope>NUCLEOTIDE SEQUENCE [LARGE SCALE GENOMIC DNA]</scope>
    <source>
        <strain>ATCC 12228 / FDA PCI 1200</strain>
    </source>
</reference>
<sequence>MWKEKVLEYENQMIEDLKGLLSIESIRDDSKATADAPVGPGPREALDYMYNLGKRDGFSTHDVDHIAGRIEAGKGEDVLGILCHVDVVPAGDGWDSNPFQPVVTDNAIIARGTLDDKGPTIAAYYAVKILNEMKVDWKKRIHIIIGTDEESDWKCTDRYFKTEEMPALGFAPDAEFPAIHGEKGITTFDLVQNEVTEDTDEPDYELLKFESGQRYNMVPDYAKAEVLVKENMTDVIQNFENFLQQNQLQGESTVDSGILILTIEGKAVHGMDPSLGVNAGLFLLKFLASLNLNKSAKDFVEFNERYLFESHFGEKMGMKFHTDIMGDVTTNIGVISYDKEKAGRYGINLRYPEGFKFEDAIDRFRSEINELGFNLELGKVQKPHYVDKNDPFVKTLVNAYRNQTGDMTEPYTIGGGTYARNLDKGVAFGAMFADSEDLMHQKNEYITKKQLINATSIYLEAIYALCVED</sequence>
<gene>
    <name type="ordered locus">SE_1424</name>
</gene>
<name>PEPVL_STAES</name>